<evidence type="ECO:0000255" key="1">
    <source>
        <dbReference type="HAMAP-Rule" id="MF_01536"/>
    </source>
</evidence>
<reference key="1">
    <citation type="journal article" date="2006" name="J. Bacteriol.">
        <title>Pathogenomic sequence analysis of Bacillus cereus and Bacillus thuringiensis isolates closely related to Bacillus anthracis.</title>
        <authorList>
            <person name="Han C.S."/>
            <person name="Xie G."/>
            <person name="Challacombe J.F."/>
            <person name="Altherr M.R."/>
            <person name="Bhotika S.S."/>
            <person name="Bruce D."/>
            <person name="Campbell C.S."/>
            <person name="Campbell M.L."/>
            <person name="Chen J."/>
            <person name="Chertkov O."/>
            <person name="Cleland C."/>
            <person name="Dimitrijevic M."/>
            <person name="Doggett N.A."/>
            <person name="Fawcett J.J."/>
            <person name="Glavina T."/>
            <person name="Goodwin L.A."/>
            <person name="Hill K.K."/>
            <person name="Hitchcock P."/>
            <person name="Jackson P.J."/>
            <person name="Keim P."/>
            <person name="Kewalramani A.R."/>
            <person name="Longmire J."/>
            <person name="Lucas S."/>
            <person name="Malfatti S."/>
            <person name="McMurry K."/>
            <person name="Meincke L.J."/>
            <person name="Misra M."/>
            <person name="Moseman B.L."/>
            <person name="Mundt M."/>
            <person name="Munk A.C."/>
            <person name="Okinaka R.T."/>
            <person name="Parson-Quintana B."/>
            <person name="Reilly L.P."/>
            <person name="Richardson P."/>
            <person name="Robinson D.L."/>
            <person name="Rubin E."/>
            <person name="Saunders E."/>
            <person name="Tapia R."/>
            <person name="Tesmer J.G."/>
            <person name="Thayer N."/>
            <person name="Thompson L.S."/>
            <person name="Tice H."/>
            <person name="Ticknor L.O."/>
            <person name="Wills P.L."/>
            <person name="Brettin T.S."/>
            <person name="Gilna P."/>
        </authorList>
    </citation>
    <scope>NUCLEOTIDE SEQUENCE [LARGE SCALE GENOMIC DNA]</scope>
    <source>
        <strain>97-27</strain>
    </source>
</reference>
<accession>Q6HM31</accession>
<keyword id="KW-1003">Cell membrane</keyword>
<keyword id="KW-0472">Membrane</keyword>
<keyword id="KW-0812">Transmembrane</keyword>
<keyword id="KW-1133">Transmembrane helix</keyword>
<proteinExistence type="inferred from homology"/>
<feature type="chain" id="PRO_0000105883" description="UPF0344 protein BT9727_1053">
    <location>
        <begin position="1"/>
        <end position="121"/>
    </location>
</feature>
<feature type="transmembrane region" description="Helical" evidence="1">
    <location>
        <begin position="6"/>
        <end position="26"/>
    </location>
</feature>
<feature type="transmembrane region" description="Helical" evidence="1">
    <location>
        <begin position="38"/>
        <end position="58"/>
    </location>
</feature>
<feature type="transmembrane region" description="Helical" evidence="1">
    <location>
        <begin position="65"/>
        <end position="85"/>
    </location>
</feature>
<feature type="transmembrane region" description="Helical" evidence="1">
    <location>
        <begin position="92"/>
        <end position="112"/>
    </location>
</feature>
<comment type="subcellular location">
    <subcellularLocation>
        <location evidence="1">Cell membrane</location>
        <topology evidence="1">Multi-pass membrane protein</topology>
    </subcellularLocation>
</comment>
<comment type="similarity">
    <text evidence="1">Belongs to the UPF0344 family.</text>
</comment>
<dbReference type="EMBL" id="AE017355">
    <property type="protein sequence ID" value="AAT62224.1"/>
    <property type="molecule type" value="Genomic_DNA"/>
</dbReference>
<dbReference type="RefSeq" id="WP_000233490.1">
    <property type="nucleotide sequence ID" value="NC_005957.1"/>
</dbReference>
<dbReference type="RefSeq" id="YP_035390.1">
    <property type="nucleotide sequence ID" value="NC_005957.1"/>
</dbReference>
<dbReference type="KEGG" id="btk:BT9727_1053"/>
<dbReference type="PATRIC" id="fig|281309.8.peg.1107"/>
<dbReference type="HOGENOM" id="CLU_146641_1_1_9"/>
<dbReference type="PRO" id="PR:Q6HM31"/>
<dbReference type="Proteomes" id="UP000001301">
    <property type="component" value="Chromosome"/>
</dbReference>
<dbReference type="GO" id="GO:0005886">
    <property type="term" value="C:plasma membrane"/>
    <property type="evidence" value="ECO:0007669"/>
    <property type="project" value="UniProtKB-SubCell"/>
</dbReference>
<dbReference type="HAMAP" id="MF_01536">
    <property type="entry name" value="UPF0344"/>
    <property type="match status" value="1"/>
</dbReference>
<dbReference type="InterPro" id="IPR010899">
    <property type="entry name" value="UPF0344"/>
</dbReference>
<dbReference type="NCBIfam" id="NF010194">
    <property type="entry name" value="PRK13673.1-1"/>
    <property type="match status" value="1"/>
</dbReference>
<dbReference type="Pfam" id="PF07457">
    <property type="entry name" value="DUF1516"/>
    <property type="match status" value="1"/>
</dbReference>
<gene>
    <name type="ordered locus">BT9727_1053</name>
</gene>
<organism>
    <name type="scientific">Bacillus thuringiensis subsp. konkukian (strain 97-27)</name>
    <dbReference type="NCBI Taxonomy" id="281309"/>
    <lineage>
        <taxon>Bacteria</taxon>
        <taxon>Bacillati</taxon>
        <taxon>Bacillota</taxon>
        <taxon>Bacilli</taxon>
        <taxon>Bacillales</taxon>
        <taxon>Bacillaceae</taxon>
        <taxon>Bacillus</taxon>
        <taxon>Bacillus cereus group</taxon>
    </lineage>
</organism>
<name>Y1053_BACHK</name>
<protein>
    <recommendedName>
        <fullName evidence="1">UPF0344 protein BT9727_1053</fullName>
    </recommendedName>
</protein>
<sequence length="121" mass="13465">MVHMHITAWALGLILFFVAYSLYSAGRKGKGVHMGLRLMYIIIIVTGFMLYMGIMKTATSNMHMWYGLKMIAGILVIGGMEMVLVKMSKNKATGAVWGLFIVALVAVFYLGLKLPIGWQVF</sequence>